<proteinExistence type="inferred from homology"/>
<reference key="1">
    <citation type="journal article" date="2001" name="Nature">
        <title>Genome sequence of enterohaemorrhagic Escherichia coli O157:H7.</title>
        <authorList>
            <person name="Perna N.T."/>
            <person name="Plunkett G. III"/>
            <person name="Burland V."/>
            <person name="Mau B."/>
            <person name="Glasner J.D."/>
            <person name="Rose D.J."/>
            <person name="Mayhew G.F."/>
            <person name="Evans P.S."/>
            <person name="Gregor J."/>
            <person name="Kirkpatrick H.A."/>
            <person name="Posfai G."/>
            <person name="Hackett J."/>
            <person name="Klink S."/>
            <person name="Boutin A."/>
            <person name="Shao Y."/>
            <person name="Miller L."/>
            <person name="Grotbeck E.J."/>
            <person name="Davis N.W."/>
            <person name="Lim A."/>
            <person name="Dimalanta E.T."/>
            <person name="Potamousis K."/>
            <person name="Apodaca J."/>
            <person name="Anantharaman T.S."/>
            <person name="Lin J."/>
            <person name="Yen G."/>
            <person name="Schwartz D.C."/>
            <person name="Welch R.A."/>
            <person name="Blattner F.R."/>
        </authorList>
    </citation>
    <scope>NUCLEOTIDE SEQUENCE [LARGE SCALE GENOMIC DNA]</scope>
    <source>
        <strain>O157:H7 / EDL933 / ATCC 700927 / EHEC</strain>
    </source>
</reference>
<reference key="2">
    <citation type="journal article" date="2001" name="DNA Res.">
        <title>Complete genome sequence of enterohemorrhagic Escherichia coli O157:H7 and genomic comparison with a laboratory strain K-12.</title>
        <authorList>
            <person name="Hayashi T."/>
            <person name="Makino K."/>
            <person name="Ohnishi M."/>
            <person name="Kurokawa K."/>
            <person name="Ishii K."/>
            <person name="Yokoyama K."/>
            <person name="Han C.-G."/>
            <person name="Ohtsubo E."/>
            <person name="Nakayama K."/>
            <person name="Murata T."/>
            <person name="Tanaka M."/>
            <person name="Tobe T."/>
            <person name="Iida T."/>
            <person name="Takami H."/>
            <person name="Honda T."/>
            <person name="Sasakawa C."/>
            <person name="Ogasawara N."/>
            <person name="Yasunaga T."/>
            <person name="Kuhara S."/>
            <person name="Shiba T."/>
            <person name="Hattori M."/>
            <person name="Shinagawa H."/>
        </authorList>
    </citation>
    <scope>NUCLEOTIDE SEQUENCE [LARGE SCALE GENOMIC DNA]</scope>
    <source>
        <strain>O157:H7 / Sakai / RIMD 0509952 / EHEC</strain>
    </source>
</reference>
<feature type="chain" id="PRO_0000169383" description="Uncharacterized protein YqgB">
    <location>
        <begin position="1"/>
        <end position="43"/>
    </location>
</feature>
<protein>
    <recommendedName>
        <fullName>Uncharacterized protein YqgB</fullName>
    </recommendedName>
</protein>
<comment type="subcellular location">
    <subcellularLocation>
        <location evidence="1">Cytoplasm</location>
    </subcellularLocation>
</comment>
<comment type="similarity">
    <text evidence="2">Belongs to the YqgB family.</text>
</comment>
<comment type="sequence caution" evidence="2">
    <conflict type="erroneous initiation">
        <sequence resource="EMBL-CDS" id="AAG58070"/>
    </conflict>
    <text>Extended N-terminus.</text>
</comment>
<organism>
    <name type="scientific">Escherichia coli O157:H7</name>
    <dbReference type="NCBI Taxonomy" id="83334"/>
    <lineage>
        <taxon>Bacteria</taxon>
        <taxon>Pseudomonadati</taxon>
        <taxon>Pseudomonadota</taxon>
        <taxon>Gammaproteobacteria</taxon>
        <taxon>Enterobacterales</taxon>
        <taxon>Enterobacteriaceae</taxon>
        <taxon>Escherichia</taxon>
    </lineage>
</organism>
<sequence length="43" mass="4859">MKKKPVAQLERQHSLLENPCAYGLLSQFQAAIVVNCFTLNKII</sequence>
<accession>P64569</accession>
<accession>P46877</accession>
<evidence type="ECO:0000250" key="1"/>
<evidence type="ECO:0000305" key="2"/>
<name>YQGB_ECO57</name>
<keyword id="KW-0963">Cytoplasm</keyword>
<keyword id="KW-1185">Reference proteome</keyword>
<dbReference type="EMBL" id="AE005174">
    <property type="protein sequence ID" value="AAG58070.1"/>
    <property type="status" value="ALT_INIT"/>
    <property type="molecule type" value="Genomic_DNA"/>
</dbReference>
<dbReference type="EMBL" id="BA000007">
    <property type="protein sequence ID" value="BAB37238.2"/>
    <property type="molecule type" value="Genomic_DNA"/>
</dbReference>
<dbReference type="PIR" id="B85951">
    <property type="entry name" value="B85951"/>
</dbReference>
<dbReference type="PIR" id="G91105">
    <property type="entry name" value="G91105"/>
</dbReference>
<dbReference type="RefSeq" id="NP_311842.2">
    <property type="nucleotide sequence ID" value="NC_002695.1"/>
</dbReference>
<dbReference type="RefSeq" id="WP_001297406.1">
    <property type="nucleotide sequence ID" value="NZ_VOAI01000003.1"/>
</dbReference>
<dbReference type="STRING" id="155864.Z4284"/>
<dbReference type="GeneID" id="916363"/>
<dbReference type="GeneID" id="93779056"/>
<dbReference type="KEGG" id="ece:Z4284"/>
<dbReference type="KEGG" id="ecs:ECs_3815"/>
<dbReference type="PATRIC" id="fig|386585.9.peg.3982"/>
<dbReference type="eggNOG" id="ENOG5033JXD">
    <property type="taxonomic scope" value="Bacteria"/>
</dbReference>
<dbReference type="HOGENOM" id="CLU_216465_0_0_6"/>
<dbReference type="Proteomes" id="UP000000558">
    <property type="component" value="Chromosome"/>
</dbReference>
<dbReference type="Proteomes" id="UP000002519">
    <property type="component" value="Chromosome"/>
</dbReference>
<dbReference type="GO" id="GO:0005737">
    <property type="term" value="C:cytoplasm"/>
    <property type="evidence" value="ECO:0007669"/>
    <property type="project" value="UniProtKB-SubCell"/>
</dbReference>
<dbReference type="InterPro" id="IPR020196">
    <property type="entry name" value="Uncharacterised_YqgB"/>
</dbReference>
<dbReference type="NCBIfam" id="NF033844">
    <property type="entry name" value="small_YqgB"/>
    <property type="match status" value="1"/>
</dbReference>
<dbReference type="Pfam" id="PF11036">
    <property type="entry name" value="YqgB"/>
    <property type="match status" value="1"/>
</dbReference>
<gene>
    <name type="primary">yqgB</name>
    <name type="ordered locus">Z4284</name>
    <name type="ordered locus">ECs3815</name>
</gene>